<reference key="1">
    <citation type="journal article" date="1997" name="Science">
        <title>The complete genome sequence of Escherichia coli K-12.</title>
        <authorList>
            <person name="Blattner F.R."/>
            <person name="Plunkett G. III"/>
            <person name="Bloch C.A."/>
            <person name="Perna N.T."/>
            <person name="Burland V."/>
            <person name="Riley M."/>
            <person name="Collado-Vides J."/>
            <person name="Glasner J.D."/>
            <person name="Rode C.K."/>
            <person name="Mayhew G.F."/>
            <person name="Gregor J."/>
            <person name="Davis N.W."/>
            <person name="Kirkpatrick H.A."/>
            <person name="Goeden M.A."/>
            <person name="Rose D.J."/>
            <person name="Mau B."/>
            <person name="Shao Y."/>
        </authorList>
    </citation>
    <scope>NUCLEOTIDE SEQUENCE [LARGE SCALE GENOMIC DNA]</scope>
    <source>
        <strain>K12 / MG1655 / ATCC 47076</strain>
    </source>
</reference>
<reference key="2">
    <citation type="journal article" date="2006" name="Mol. Syst. Biol.">
        <title>Highly accurate genome sequences of Escherichia coli K-12 strains MG1655 and W3110.</title>
        <authorList>
            <person name="Hayashi K."/>
            <person name="Morooka N."/>
            <person name="Yamamoto Y."/>
            <person name="Fujita K."/>
            <person name="Isono K."/>
            <person name="Choi S."/>
            <person name="Ohtsubo E."/>
            <person name="Baba T."/>
            <person name="Wanner B.L."/>
            <person name="Mori H."/>
            <person name="Horiuchi T."/>
        </authorList>
    </citation>
    <scope>NUCLEOTIDE SEQUENCE [LARGE SCALE GENOMIC DNA]</scope>
    <source>
        <strain>K12 / W3110 / ATCC 27325 / DSM 5911</strain>
    </source>
</reference>
<sequence>MMKFKKCLLPVAMLASFTLAGCQSNADDHAADVYQTDQLNTKQETKTVNIISILPAKVAVDNSQNKRNAQAFGALIGAVAGGVIGHNVGSGSNSGTTAGAVGGGAVGAAAGSMVNDKTLVEGVSLTYKEGTKVYTSTQVGKECQFTTGLAVVITTTYNETRIQPNTKCPEKS</sequence>
<name>YFGH_ECOLI</name>
<comment type="subcellular location">
    <subcellularLocation>
        <location evidence="1">Cell membrane</location>
        <topology evidence="1">Lipid-anchor</topology>
    </subcellularLocation>
</comment>
<dbReference type="EMBL" id="U00096">
    <property type="protein sequence ID" value="AAC75558.1"/>
    <property type="molecule type" value="Genomic_DNA"/>
</dbReference>
<dbReference type="EMBL" id="AP009048">
    <property type="protein sequence ID" value="BAE76726.1"/>
    <property type="molecule type" value="Genomic_DNA"/>
</dbReference>
<dbReference type="PIR" id="H65026">
    <property type="entry name" value="H65026"/>
</dbReference>
<dbReference type="RefSeq" id="NP_417000.1">
    <property type="nucleotide sequence ID" value="NC_000913.3"/>
</dbReference>
<dbReference type="RefSeq" id="WP_001295476.1">
    <property type="nucleotide sequence ID" value="NZ_STEB01000011.1"/>
</dbReference>
<dbReference type="SMR" id="P65290"/>
<dbReference type="BioGRID" id="4261322">
    <property type="interactions" value="211"/>
</dbReference>
<dbReference type="FunCoup" id="P65290">
    <property type="interactions" value="2"/>
</dbReference>
<dbReference type="STRING" id="511145.b2505"/>
<dbReference type="PaxDb" id="511145-b2505"/>
<dbReference type="EnsemblBacteria" id="AAC75558">
    <property type="protein sequence ID" value="AAC75558"/>
    <property type="gene ID" value="b2505"/>
</dbReference>
<dbReference type="GeneID" id="945709"/>
<dbReference type="KEGG" id="ecj:JW5400"/>
<dbReference type="KEGG" id="eco:b2505"/>
<dbReference type="PATRIC" id="fig|511145.12.peg.2603"/>
<dbReference type="EchoBASE" id="EB3956"/>
<dbReference type="eggNOG" id="COG3133">
    <property type="taxonomic scope" value="Bacteria"/>
</dbReference>
<dbReference type="HOGENOM" id="CLU_112454_0_0_6"/>
<dbReference type="InParanoid" id="P65290"/>
<dbReference type="OMA" id="QSNADEH"/>
<dbReference type="BioCyc" id="EcoCyc:G7316-MONOMER"/>
<dbReference type="PRO" id="PR:P65290"/>
<dbReference type="Proteomes" id="UP000000625">
    <property type="component" value="Chromosome"/>
</dbReference>
<dbReference type="GO" id="GO:0009279">
    <property type="term" value="C:cell outer membrane"/>
    <property type="evidence" value="ECO:0000314"/>
    <property type="project" value="EcoCyc"/>
</dbReference>
<dbReference type="GO" id="GO:0005886">
    <property type="term" value="C:plasma membrane"/>
    <property type="evidence" value="ECO:0007669"/>
    <property type="project" value="UniProtKB-SubCell"/>
</dbReference>
<dbReference type="InterPro" id="IPR051407">
    <property type="entry name" value="Bact_OM_lipoprot/Surf_antigen"/>
</dbReference>
<dbReference type="InterPro" id="IPR008816">
    <property type="entry name" value="Gly_zipper_2TM_dom"/>
</dbReference>
<dbReference type="PANTHER" id="PTHR35603">
    <property type="match status" value="1"/>
</dbReference>
<dbReference type="PANTHER" id="PTHR35603:SF1">
    <property type="entry name" value="OUTER MEMBRANE LIPOPROTEIN SLYB"/>
    <property type="match status" value="1"/>
</dbReference>
<dbReference type="Pfam" id="PF05433">
    <property type="entry name" value="Rick_17kDa_Anti"/>
    <property type="match status" value="1"/>
</dbReference>
<dbReference type="PROSITE" id="PS51257">
    <property type="entry name" value="PROKAR_LIPOPROTEIN"/>
    <property type="match status" value="1"/>
</dbReference>
<proteinExistence type="inferred from homology"/>
<protein>
    <recommendedName>
        <fullName>Uncharacterized lipoprotein YfgH</fullName>
    </recommendedName>
</protein>
<keyword id="KW-1003">Cell membrane</keyword>
<keyword id="KW-0449">Lipoprotein</keyword>
<keyword id="KW-0472">Membrane</keyword>
<keyword id="KW-0564">Palmitate</keyword>
<keyword id="KW-1185">Reference proteome</keyword>
<keyword id="KW-0732">Signal</keyword>
<organism>
    <name type="scientific">Escherichia coli (strain K12)</name>
    <dbReference type="NCBI Taxonomy" id="83333"/>
    <lineage>
        <taxon>Bacteria</taxon>
        <taxon>Pseudomonadati</taxon>
        <taxon>Pseudomonadota</taxon>
        <taxon>Gammaproteobacteria</taxon>
        <taxon>Enterobacterales</taxon>
        <taxon>Enterobacteriaceae</taxon>
        <taxon>Escherichia</taxon>
    </lineage>
</organism>
<accession>P65290</accession>
<accession>P76572</accession>
<accession>Q2MAI0</accession>
<evidence type="ECO:0000255" key="1">
    <source>
        <dbReference type="PROSITE-ProRule" id="PRU00303"/>
    </source>
</evidence>
<feature type="signal peptide" evidence="1">
    <location>
        <begin position="1"/>
        <end position="21"/>
    </location>
</feature>
<feature type="chain" id="PRO_0000018045" description="Uncharacterized lipoprotein YfgH">
    <location>
        <begin position="22"/>
        <end position="172"/>
    </location>
</feature>
<feature type="lipid moiety-binding region" description="N-palmitoyl cysteine" evidence="1">
    <location>
        <position position="22"/>
    </location>
</feature>
<feature type="lipid moiety-binding region" description="S-diacylglycerol cysteine" evidence="1">
    <location>
        <position position="22"/>
    </location>
</feature>
<gene>
    <name type="primary">yfgH</name>
    <name type="ordered locus">b2505</name>
    <name type="ordered locus">JW5400</name>
</gene>